<reference key="1">
    <citation type="journal article" date="2008" name="DNA Res.">
        <title>Complete genome sequence and comparative analysis of the wild-type commensal Escherichia coli strain SE11 isolated from a healthy adult.</title>
        <authorList>
            <person name="Oshima K."/>
            <person name="Toh H."/>
            <person name="Ogura Y."/>
            <person name="Sasamoto H."/>
            <person name="Morita H."/>
            <person name="Park S.-H."/>
            <person name="Ooka T."/>
            <person name="Iyoda S."/>
            <person name="Taylor T.D."/>
            <person name="Hayashi T."/>
            <person name="Itoh K."/>
            <person name="Hattori M."/>
        </authorList>
    </citation>
    <scope>NUCLEOTIDE SEQUENCE [LARGE SCALE GENOMIC DNA]</scope>
    <source>
        <strain>SE11</strain>
    </source>
</reference>
<comment type="function">
    <text evidence="1">Bifunctional serine/threonine kinase and phosphorylase involved in the regulation of the phosphoenolpyruvate synthase (PEPS) by catalyzing its phosphorylation/dephosphorylation.</text>
</comment>
<comment type="catalytic activity">
    <reaction evidence="1">
        <text>[pyruvate, water dikinase] + ADP = [pyruvate, water dikinase]-phosphate + AMP + H(+)</text>
        <dbReference type="Rhea" id="RHEA:46020"/>
        <dbReference type="Rhea" id="RHEA-COMP:11425"/>
        <dbReference type="Rhea" id="RHEA-COMP:11426"/>
        <dbReference type="ChEBI" id="CHEBI:15378"/>
        <dbReference type="ChEBI" id="CHEBI:43176"/>
        <dbReference type="ChEBI" id="CHEBI:68546"/>
        <dbReference type="ChEBI" id="CHEBI:456215"/>
        <dbReference type="ChEBI" id="CHEBI:456216"/>
        <dbReference type="EC" id="2.7.11.33"/>
    </reaction>
</comment>
<comment type="catalytic activity">
    <reaction evidence="1">
        <text>[pyruvate, water dikinase]-phosphate + phosphate + H(+) = [pyruvate, water dikinase] + diphosphate</text>
        <dbReference type="Rhea" id="RHEA:48580"/>
        <dbReference type="Rhea" id="RHEA-COMP:11425"/>
        <dbReference type="Rhea" id="RHEA-COMP:11426"/>
        <dbReference type="ChEBI" id="CHEBI:15378"/>
        <dbReference type="ChEBI" id="CHEBI:33019"/>
        <dbReference type="ChEBI" id="CHEBI:43176"/>
        <dbReference type="ChEBI" id="CHEBI:43474"/>
        <dbReference type="ChEBI" id="CHEBI:68546"/>
        <dbReference type="EC" id="2.7.4.28"/>
    </reaction>
</comment>
<comment type="similarity">
    <text evidence="1">Belongs to the pyruvate, phosphate/water dikinase regulatory protein family. PSRP subfamily.</text>
</comment>
<gene>
    <name evidence="1" type="primary">ppsR</name>
    <name type="ordered locus">ECSE_1828</name>
</gene>
<sequence length="277" mass="31211">MDNAVDRHVFYISDGTAITAEVLGHAVMSQFPVTISSITLPFVENESRARAVKDQIDAIYHQTGVRPLVFYSIVLPEIRAIILQSEGFCQDIVQALVAPLQQEMKLDPTPIAHRTHGLNPNNLNKYDARIAAIDYTLAHDDGISLRNLDQAQVILLGVSRCGKTPTSLYLAMQFGIRAANYPFIADDMDNLVLPASLKPLQHKLFGLTIDPERLAAIREERRENSRYASLRQCRMEVAEVEALYRKNQIPWINSTNYSVEEIATKILDIMGLSRRMY</sequence>
<evidence type="ECO:0000255" key="1">
    <source>
        <dbReference type="HAMAP-Rule" id="MF_01062"/>
    </source>
</evidence>
<organism>
    <name type="scientific">Escherichia coli (strain SE11)</name>
    <dbReference type="NCBI Taxonomy" id="409438"/>
    <lineage>
        <taxon>Bacteria</taxon>
        <taxon>Pseudomonadati</taxon>
        <taxon>Pseudomonadota</taxon>
        <taxon>Gammaproteobacteria</taxon>
        <taxon>Enterobacterales</taxon>
        <taxon>Enterobacteriaceae</taxon>
        <taxon>Escherichia</taxon>
    </lineage>
</organism>
<name>PSRP_ECOSE</name>
<feature type="chain" id="PRO_1000136472" description="Phosphoenolpyruvate synthase regulatory protein">
    <location>
        <begin position="1"/>
        <end position="277"/>
    </location>
</feature>
<feature type="binding site" evidence="1">
    <location>
        <begin position="157"/>
        <end position="164"/>
    </location>
    <ligand>
        <name>ADP</name>
        <dbReference type="ChEBI" id="CHEBI:456216"/>
    </ligand>
</feature>
<keyword id="KW-0418">Kinase</keyword>
<keyword id="KW-0547">Nucleotide-binding</keyword>
<keyword id="KW-0723">Serine/threonine-protein kinase</keyword>
<keyword id="KW-0808">Transferase</keyword>
<protein>
    <recommendedName>
        <fullName evidence="1">Phosphoenolpyruvate synthase regulatory protein</fullName>
        <shortName evidence="1">PEP synthase regulatory protein</shortName>
        <shortName evidence="1">PSRP</shortName>
        <ecNumber evidence="1">2.7.11.33</ecNumber>
        <ecNumber evidence="1">2.7.4.28</ecNumber>
    </recommendedName>
    <alternativeName>
        <fullName evidence="1">Pyruvate, water dikinase regulatory protein</fullName>
    </alternativeName>
</protein>
<dbReference type="EC" id="2.7.11.33" evidence="1"/>
<dbReference type="EC" id="2.7.4.28" evidence="1"/>
<dbReference type="EMBL" id="AP009240">
    <property type="protein sequence ID" value="BAG77352.1"/>
    <property type="molecule type" value="Genomic_DNA"/>
</dbReference>
<dbReference type="RefSeq" id="WP_000368046.1">
    <property type="nucleotide sequence ID" value="NC_011415.1"/>
</dbReference>
<dbReference type="SMR" id="B6I8Q8"/>
<dbReference type="GeneID" id="93775866"/>
<dbReference type="KEGG" id="ecy:ECSE_1828"/>
<dbReference type="HOGENOM" id="CLU_046206_1_0_6"/>
<dbReference type="Proteomes" id="UP000008199">
    <property type="component" value="Chromosome"/>
</dbReference>
<dbReference type="GO" id="GO:0043531">
    <property type="term" value="F:ADP binding"/>
    <property type="evidence" value="ECO:0007669"/>
    <property type="project" value="UniProtKB-UniRule"/>
</dbReference>
<dbReference type="GO" id="GO:0005524">
    <property type="term" value="F:ATP binding"/>
    <property type="evidence" value="ECO:0007669"/>
    <property type="project" value="InterPro"/>
</dbReference>
<dbReference type="GO" id="GO:0016776">
    <property type="term" value="F:phosphotransferase activity, phosphate group as acceptor"/>
    <property type="evidence" value="ECO:0007669"/>
    <property type="project" value="UniProtKB-UniRule"/>
</dbReference>
<dbReference type="GO" id="GO:0004674">
    <property type="term" value="F:protein serine/threonine kinase activity"/>
    <property type="evidence" value="ECO:0007669"/>
    <property type="project" value="UniProtKB-UniRule"/>
</dbReference>
<dbReference type="HAMAP" id="MF_01062">
    <property type="entry name" value="PSRP"/>
    <property type="match status" value="1"/>
</dbReference>
<dbReference type="InterPro" id="IPR005177">
    <property type="entry name" value="Kinase-pyrophosphorylase"/>
</dbReference>
<dbReference type="InterPro" id="IPR026530">
    <property type="entry name" value="PSRP"/>
</dbReference>
<dbReference type="NCBIfam" id="NF003742">
    <property type="entry name" value="PRK05339.1"/>
    <property type="match status" value="1"/>
</dbReference>
<dbReference type="PANTHER" id="PTHR31756">
    <property type="entry name" value="PYRUVATE, PHOSPHATE DIKINASE REGULATORY PROTEIN 1, CHLOROPLASTIC"/>
    <property type="match status" value="1"/>
</dbReference>
<dbReference type="PANTHER" id="PTHR31756:SF3">
    <property type="entry name" value="PYRUVATE, PHOSPHATE DIKINASE REGULATORY PROTEIN 1, CHLOROPLASTIC"/>
    <property type="match status" value="1"/>
</dbReference>
<dbReference type="Pfam" id="PF03618">
    <property type="entry name" value="Kinase-PPPase"/>
    <property type="match status" value="1"/>
</dbReference>
<proteinExistence type="inferred from homology"/>
<accession>B6I8Q8</accession>